<dbReference type="EC" id="6.2.1.-"/>
<dbReference type="EMBL" id="CP000029">
    <property type="protein sequence ID" value="AAW53591.1"/>
    <property type="molecule type" value="Genomic_DNA"/>
</dbReference>
<dbReference type="SMR" id="Q5HRH4"/>
<dbReference type="STRING" id="176279.SERP0219"/>
<dbReference type="KEGG" id="ser:SERP0219"/>
<dbReference type="eggNOG" id="COG0318">
    <property type="taxonomic scope" value="Bacteria"/>
</dbReference>
<dbReference type="HOGENOM" id="CLU_000022_59_0_9"/>
<dbReference type="Proteomes" id="UP000000531">
    <property type="component" value="Chromosome"/>
</dbReference>
<dbReference type="GO" id="GO:0031956">
    <property type="term" value="F:medium-chain fatty acid-CoA ligase activity"/>
    <property type="evidence" value="ECO:0007669"/>
    <property type="project" value="TreeGrafter"/>
</dbReference>
<dbReference type="GO" id="GO:0006631">
    <property type="term" value="P:fatty acid metabolic process"/>
    <property type="evidence" value="ECO:0007669"/>
    <property type="project" value="UniProtKB-KW"/>
</dbReference>
<dbReference type="CDD" id="cd17633">
    <property type="entry name" value="AFD_YhfT-like"/>
    <property type="match status" value="1"/>
</dbReference>
<dbReference type="Gene3D" id="3.30.300.30">
    <property type="match status" value="1"/>
</dbReference>
<dbReference type="Gene3D" id="3.40.50.12780">
    <property type="entry name" value="N-terminal domain of ligase-like"/>
    <property type="match status" value="1"/>
</dbReference>
<dbReference type="InterPro" id="IPR045851">
    <property type="entry name" value="AMP-bd_C_sf"/>
</dbReference>
<dbReference type="InterPro" id="IPR020845">
    <property type="entry name" value="AMP-binding_CS"/>
</dbReference>
<dbReference type="InterPro" id="IPR000873">
    <property type="entry name" value="AMP-dep_synth/lig_dom"/>
</dbReference>
<dbReference type="InterPro" id="IPR042099">
    <property type="entry name" value="ANL_N_sf"/>
</dbReference>
<dbReference type="PANTHER" id="PTHR43201">
    <property type="entry name" value="ACYL-COA SYNTHETASE"/>
    <property type="match status" value="1"/>
</dbReference>
<dbReference type="PANTHER" id="PTHR43201:SF5">
    <property type="entry name" value="MEDIUM-CHAIN ACYL-COA LIGASE ACSF2, MITOCHONDRIAL"/>
    <property type="match status" value="1"/>
</dbReference>
<dbReference type="Pfam" id="PF00501">
    <property type="entry name" value="AMP-binding"/>
    <property type="match status" value="1"/>
</dbReference>
<dbReference type="SUPFAM" id="SSF56801">
    <property type="entry name" value="Acetyl-CoA synthetase-like"/>
    <property type="match status" value="1"/>
</dbReference>
<dbReference type="PROSITE" id="PS00455">
    <property type="entry name" value="AMP_BINDING"/>
    <property type="match status" value="1"/>
</dbReference>
<proteinExistence type="inferred from homology"/>
<protein>
    <recommendedName>
        <fullName>Putative long chain fatty acid-CoA ligase VraA</fullName>
        <ecNumber>6.2.1.-</ecNumber>
    </recommendedName>
    <alternativeName>
        <fullName>Acyl-CoA synthetase</fullName>
    </alternativeName>
</protein>
<feature type="chain" id="PRO_0000193198" description="Putative long chain fatty acid-CoA ligase VraA">
    <location>
        <begin position="1"/>
        <end position="453"/>
    </location>
</feature>
<name>VRAA_STAEQ</name>
<comment type="similarity">
    <text evidence="1">Belongs to the ATP-dependent AMP-binding enzyme family.</text>
</comment>
<keyword id="KW-0276">Fatty acid metabolism</keyword>
<keyword id="KW-0436">Ligase</keyword>
<keyword id="KW-0443">Lipid metabolism</keyword>
<keyword id="KW-1185">Reference proteome</keyword>
<gene>
    <name type="primary">vraA</name>
    <name type="ordered locus">SERP0219</name>
</gene>
<reference key="1">
    <citation type="journal article" date="2005" name="J. Bacteriol.">
        <title>Insights on evolution of virulence and resistance from the complete genome analysis of an early methicillin-resistant Staphylococcus aureus strain and a biofilm-producing methicillin-resistant Staphylococcus epidermidis strain.</title>
        <authorList>
            <person name="Gill S.R."/>
            <person name="Fouts D.E."/>
            <person name="Archer G.L."/>
            <person name="Mongodin E.F."/>
            <person name="DeBoy R.T."/>
            <person name="Ravel J."/>
            <person name="Paulsen I.T."/>
            <person name="Kolonay J.F."/>
            <person name="Brinkac L.M."/>
            <person name="Beanan M.J."/>
            <person name="Dodson R.J."/>
            <person name="Daugherty S.C."/>
            <person name="Madupu R."/>
            <person name="Angiuoli S.V."/>
            <person name="Durkin A.S."/>
            <person name="Haft D.H."/>
            <person name="Vamathevan J.J."/>
            <person name="Khouri H."/>
            <person name="Utterback T.R."/>
            <person name="Lee C."/>
            <person name="Dimitrov G."/>
            <person name="Jiang L."/>
            <person name="Qin H."/>
            <person name="Weidman J."/>
            <person name="Tran K."/>
            <person name="Kang K.H."/>
            <person name="Hance I.R."/>
            <person name="Nelson K.E."/>
            <person name="Fraser C.M."/>
        </authorList>
    </citation>
    <scope>NUCLEOTIDE SEQUENCE [LARGE SCALE GENOMIC DNA]</scope>
    <source>
        <strain>ATCC 35984 / DSM 28319 / BCRC 17069 / CCUG 31568 / BM 3577 / RP62A</strain>
    </source>
</reference>
<accession>Q5HRH4</accession>
<evidence type="ECO:0000305" key="1"/>
<sequence>MKKIMEYLQHYINQYPHRLALVFEDRHLTYGELSKEIYQASMRYKEVKLNEKVGLMDDHPVNNIINYFAVHQRGGIPCIFNHQWSNERIHQLVKSYDIQWLIKDNHLTLNHDDSIYNDEVIPRNVIHIGFTSGTTGLPKAFYRNEHSWIVSFKENEKLLQHCEETIVAPGPLSHSLSLYACIYALSTGKTFIGQKNFNPLSLMRLINQLNKATAIFVVPTMVQQLISTQRHCSSIKSILSSGAKLTLQQFQQISTLYPQANLIEFFGTSEASFISYNFNQSSPAHSVGKLFPHVETRLLNQDDDAVGLLAVRSEMVFSGYVGQSNQEGSWIKTGDFAYIKNQHLFLVGRESDRIIVGGINVYPTAIESLIMDIEGIDEALVIGIPHAKFGEIAILLYSGKVQLNYRQIKSFLMKQLSRQEVPSKLKKIDHMIYTESGKIARKEMKNKFINGEL</sequence>
<organism>
    <name type="scientific">Staphylococcus epidermidis (strain ATCC 35984 / DSM 28319 / BCRC 17069 / CCUG 31568 / BM 3577 / RP62A)</name>
    <dbReference type="NCBI Taxonomy" id="176279"/>
    <lineage>
        <taxon>Bacteria</taxon>
        <taxon>Bacillati</taxon>
        <taxon>Bacillota</taxon>
        <taxon>Bacilli</taxon>
        <taxon>Bacillales</taxon>
        <taxon>Staphylococcaceae</taxon>
        <taxon>Staphylococcus</taxon>
    </lineage>
</organism>